<name>RL17_ENDTX</name>
<reference key="1">
    <citation type="journal article" date="2008" name="Proc. Natl. Acad. Sci. U.S.A.">
        <title>Complete genome of the uncultured termite group 1 bacteria in a single host protist cell.</title>
        <authorList>
            <person name="Hongoh Y."/>
            <person name="Sharma V.K."/>
            <person name="Prakash T."/>
            <person name="Noda S."/>
            <person name="Taylor T.D."/>
            <person name="Kudo T."/>
            <person name="Sakaki Y."/>
            <person name="Toyoda A."/>
            <person name="Hattori M."/>
            <person name="Ohkuma M."/>
        </authorList>
    </citation>
    <scope>NUCLEOTIDE SEQUENCE [LARGE SCALE GENOMIC DNA]</scope>
</reference>
<evidence type="ECO:0000255" key="1">
    <source>
        <dbReference type="HAMAP-Rule" id="MF_01368"/>
    </source>
</evidence>
<evidence type="ECO:0000305" key="2"/>
<comment type="subunit">
    <text evidence="1">Part of the 50S ribosomal subunit. Contacts protein L32.</text>
</comment>
<comment type="similarity">
    <text evidence="1">Belongs to the bacterial ribosomal protein bL17 family.</text>
</comment>
<dbReference type="EMBL" id="AP009510">
    <property type="protein sequence ID" value="BAG13593.1"/>
    <property type="molecule type" value="Genomic_DNA"/>
</dbReference>
<dbReference type="RefSeq" id="WP_015423122.1">
    <property type="nucleotide sequence ID" value="NC_020419.1"/>
</dbReference>
<dbReference type="SMR" id="B1GZB1"/>
<dbReference type="STRING" id="471821.TGRD_110"/>
<dbReference type="KEGG" id="rsd:TGRD_110"/>
<dbReference type="PATRIC" id="fig|471821.5.peg.154"/>
<dbReference type="HOGENOM" id="CLU_074407_2_0_0"/>
<dbReference type="Proteomes" id="UP000001691">
    <property type="component" value="Chromosome"/>
</dbReference>
<dbReference type="GO" id="GO:0022625">
    <property type="term" value="C:cytosolic large ribosomal subunit"/>
    <property type="evidence" value="ECO:0007669"/>
    <property type="project" value="TreeGrafter"/>
</dbReference>
<dbReference type="GO" id="GO:0003735">
    <property type="term" value="F:structural constituent of ribosome"/>
    <property type="evidence" value="ECO:0007669"/>
    <property type="project" value="InterPro"/>
</dbReference>
<dbReference type="GO" id="GO:0006412">
    <property type="term" value="P:translation"/>
    <property type="evidence" value="ECO:0007669"/>
    <property type="project" value="UniProtKB-UniRule"/>
</dbReference>
<dbReference type="Gene3D" id="3.90.1030.10">
    <property type="entry name" value="Ribosomal protein L17"/>
    <property type="match status" value="1"/>
</dbReference>
<dbReference type="HAMAP" id="MF_01368">
    <property type="entry name" value="Ribosomal_bL17"/>
    <property type="match status" value="1"/>
</dbReference>
<dbReference type="InterPro" id="IPR000456">
    <property type="entry name" value="Ribosomal_bL17"/>
</dbReference>
<dbReference type="InterPro" id="IPR047859">
    <property type="entry name" value="Ribosomal_bL17_CS"/>
</dbReference>
<dbReference type="InterPro" id="IPR036373">
    <property type="entry name" value="Ribosomal_bL17_sf"/>
</dbReference>
<dbReference type="NCBIfam" id="TIGR00059">
    <property type="entry name" value="L17"/>
    <property type="match status" value="1"/>
</dbReference>
<dbReference type="PANTHER" id="PTHR14413:SF16">
    <property type="entry name" value="LARGE RIBOSOMAL SUBUNIT PROTEIN BL17M"/>
    <property type="match status" value="1"/>
</dbReference>
<dbReference type="PANTHER" id="PTHR14413">
    <property type="entry name" value="RIBOSOMAL PROTEIN L17"/>
    <property type="match status" value="1"/>
</dbReference>
<dbReference type="Pfam" id="PF01196">
    <property type="entry name" value="Ribosomal_L17"/>
    <property type="match status" value="1"/>
</dbReference>
<dbReference type="SUPFAM" id="SSF64263">
    <property type="entry name" value="Prokaryotic ribosomal protein L17"/>
    <property type="match status" value="1"/>
</dbReference>
<dbReference type="PROSITE" id="PS01167">
    <property type="entry name" value="RIBOSOMAL_L17"/>
    <property type="match status" value="1"/>
</dbReference>
<feature type="chain" id="PRO_1000144502" description="Large ribosomal subunit protein bL17">
    <location>
        <begin position="1"/>
        <end position="117"/>
    </location>
</feature>
<protein>
    <recommendedName>
        <fullName evidence="1">Large ribosomal subunit protein bL17</fullName>
    </recommendedName>
    <alternativeName>
        <fullName evidence="2">50S ribosomal protein L17</fullName>
    </alternativeName>
</protein>
<organism>
    <name type="scientific">Endomicrobium trichonymphae</name>
    <dbReference type="NCBI Taxonomy" id="1408204"/>
    <lineage>
        <taxon>Bacteria</taxon>
        <taxon>Pseudomonadati</taxon>
        <taxon>Elusimicrobiota</taxon>
        <taxon>Endomicrobiia</taxon>
        <taxon>Endomicrobiales</taxon>
        <taxon>Endomicrobiaceae</taxon>
        <taxon>Candidatus Endomicrobiellum</taxon>
    </lineage>
</organism>
<accession>B1GZB1</accession>
<sequence>MIKTYNGSKLGIASSHRKALLRNLAAALFLYEKITTTLSKAKELVSYSEKLVTKAKKADLSAMRAINGEINSKAAVKKIFDILVPRYKERSGGYTQILKVGTRRGDSADVAIVKLVT</sequence>
<gene>
    <name evidence="1" type="primary">rplQ</name>
    <name type="ordered locus">TGRD_110</name>
</gene>
<keyword id="KW-0687">Ribonucleoprotein</keyword>
<keyword id="KW-0689">Ribosomal protein</keyword>
<proteinExistence type="inferred from homology"/>